<comment type="function">
    <text evidence="1">Acts as a component of the essential kinetochore-associated NDC80 complex, which is required for chromosome segregation and spindle checkpoint activity.</text>
</comment>
<comment type="subunit">
    <text evidence="1">Component of the NDC80 complex, which consists of at least NDC80, NUF2 and SPC25.</text>
</comment>
<comment type="subcellular location">
    <subcellularLocation>
        <location evidence="1">Nucleus</location>
    </subcellularLocation>
    <subcellularLocation>
        <location evidence="1">Chromosome</location>
        <location evidence="1">Centromere</location>
        <location evidence="1">Kinetochore</location>
    </subcellularLocation>
    <text evidence="1">Associated with kinetochores.</text>
</comment>
<comment type="similarity">
    <text evidence="4">Belongs to the NDC80/HEC1 family.</text>
</comment>
<protein>
    <recommendedName>
        <fullName>Probable kinetochore protein NDC80</fullName>
    </recommendedName>
</protein>
<accession>P0CP17</accession>
<accession>Q55SB3</accession>
<accession>Q5KGR0</accession>
<feature type="chain" id="PRO_0000410165" description="Probable kinetochore protein NDC80">
    <location>
        <begin position="1"/>
        <end position="703"/>
    </location>
</feature>
<feature type="region of interest" description="Disordered" evidence="3">
    <location>
        <begin position="1"/>
        <end position="132"/>
    </location>
</feature>
<feature type="coiled-coil region" evidence="2">
    <location>
        <begin position="326"/>
        <end position="358"/>
    </location>
</feature>
<feature type="coiled-coil region" evidence="2">
    <location>
        <begin position="407"/>
        <end position="479"/>
    </location>
</feature>
<feature type="coiled-coil region" evidence="2">
    <location>
        <begin position="573"/>
        <end position="616"/>
    </location>
</feature>
<feature type="compositionally biased region" description="Low complexity" evidence="3">
    <location>
        <begin position="9"/>
        <end position="24"/>
    </location>
</feature>
<feature type="compositionally biased region" description="Polar residues" evidence="3">
    <location>
        <begin position="39"/>
        <end position="60"/>
    </location>
</feature>
<feature type="compositionally biased region" description="Polar residues" evidence="3">
    <location>
        <begin position="108"/>
        <end position="121"/>
    </location>
</feature>
<sequence>MDFRRQTLVSNGGSSQPQPSVPSSAIKKASRLGPARQSLAPSQIQSRTSILGVSNSQENASHGMMGSRKSTVPGKMGDRDQLMSASRGDGGIYGRTPQMNRGIPGSVRRSSVFTSNSQGRTSMAPGVYSTAYKDPRPLRDKVFQSNCMRNVNEYLISVRYPLPLTAKTLTSPTAKEFQSIFKFLVNDLVDPGAAWGKKFEDDTLSILKDLKYPGMDSVSKTALTAPGAPQSWPNMLAMLNWLVDLCKALDNWDDPEIISDPLMVPATELPLDYPNLDDRLLWDFAAKTYSQWFDGEAEEFDEAEQELEHAYGKSYSIVLNDTEQATDRMASATVAECEKLEREIQKRNVEIQQLHVQEVCSPITDRISFADKSYKPPLKKLEDEYVQLMSDKNKFISFLDQQGQKIEKIRLRISKVKEAVISQEAELEARQSELAHIEQAVAAQNLSPDEVQRMNHERDSLTRSLEDLRNKISEASQFAYDQEMVVTKSMDRFEGLLTDYNSLAHQIGLLDFSLDVPSLAANVNYNLDVDLGAEELEEVKAVGVRMRSTIWQALQTCREMFRQEALGLGNGTIALEDEFDKLGQSVERQKEEVGNLEVRLKIVHNQAEDAQSQIASENSDTNKIITQLETEVTNMLAASQQGVLSTQSQLESTRIAFKELRHKTALFQDSVVAEVGEHIDAIIKAKEHTANSLKSIRALAETQ</sequence>
<reference key="1">
    <citation type="journal article" date="2005" name="Science">
        <title>The genome of the basidiomycetous yeast and human pathogen Cryptococcus neoformans.</title>
        <authorList>
            <person name="Loftus B.J."/>
            <person name="Fung E."/>
            <person name="Roncaglia P."/>
            <person name="Rowley D."/>
            <person name="Amedeo P."/>
            <person name="Bruno D."/>
            <person name="Vamathevan J."/>
            <person name="Miranda M."/>
            <person name="Anderson I.J."/>
            <person name="Fraser J.A."/>
            <person name="Allen J.E."/>
            <person name="Bosdet I.E."/>
            <person name="Brent M.R."/>
            <person name="Chiu R."/>
            <person name="Doering T.L."/>
            <person name="Donlin M.J."/>
            <person name="D'Souza C.A."/>
            <person name="Fox D.S."/>
            <person name="Grinberg V."/>
            <person name="Fu J."/>
            <person name="Fukushima M."/>
            <person name="Haas B.J."/>
            <person name="Huang J.C."/>
            <person name="Janbon G."/>
            <person name="Jones S.J.M."/>
            <person name="Koo H.L."/>
            <person name="Krzywinski M.I."/>
            <person name="Kwon-Chung K.J."/>
            <person name="Lengeler K.B."/>
            <person name="Maiti R."/>
            <person name="Marra M.A."/>
            <person name="Marra R.E."/>
            <person name="Mathewson C.A."/>
            <person name="Mitchell T.G."/>
            <person name="Pertea M."/>
            <person name="Riggs F.R."/>
            <person name="Salzberg S.L."/>
            <person name="Schein J.E."/>
            <person name="Shvartsbeyn A."/>
            <person name="Shin H."/>
            <person name="Shumway M."/>
            <person name="Specht C.A."/>
            <person name="Suh B.B."/>
            <person name="Tenney A."/>
            <person name="Utterback T.R."/>
            <person name="Wickes B.L."/>
            <person name="Wortman J.R."/>
            <person name="Wye N.H."/>
            <person name="Kronstad J.W."/>
            <person name="Lodge J.K."/>
            <person name="Heitman J."/>
            <person name="Davis R.W."/>
            <person name="Fraser C.M."/>
            <person name="Hyman R.W."/>
        </authorList>
    </citation>
    <scope>NUCLEOTIDE SEQUENCE [LARGE SCALE GENOMIC DNA]</scope>
    <source>
        <strain>B-3501A</strain>
    </source>
</reference>
<keyword id="KW-0131">Cell cycle</keyword>
<keyword id="KW-0132">Cell division</keyword>
<keyword id="KW-0137">Centromere</keyword>
<keyword id="KW-0158">Chromosome</keyword>
<keyword id="KW-0175">Coiled coil</keyword>
<keyword id="KW-0995">Kinetochore</keyword>
<keyword id="KW-0498">Mitosis</keyword>
<keyword id="KW-0539">Nucleus</keyword>
<dbReference type="EMBL" id="AAEY01000024">
    <property type="protein sequence ID" value="EAL20908.1"/>
    <property type="molecule type" value="Genomic_DNA"/>
</dbReference>
<dbReference type="RefSeq" id="XP_775555.1">
    <property type="nucleotide sequence ID" value="XM_770462.1"/>
</dbReference>
<dbReference type="SMR" id="P0CP17"/>
<dbReference type="GeneID" id="4936279"/>
<dbReference type="KEGG" id="cnb:CNBE2690"/>
<dbReference type="VEuPathDB" id="FungiDB:CNBE2690"/>
<dbReference type="HOGENOM" id="CLU_012583_1_1_1"/>
<dbReference type="OrthoDB" id="2813at5206"/>
<dbReference type="GO" id="GO:0031262">
    <property type="term" value="C:Ndc80 complex"/>
    <property type="evidence" value="ECO:0000250"/>
    <property type="project" value="UniProtKB"/>
</dbReference>
<dbReference type="GO" id="GO:0005634">
    <property type="term" value="C:nucleus"/>
    <property type="evidence" value="ECO:0007669"/>
    <property type="project" value="UniProtKB-SubCell"/>
</dbReference>
<dbReference type="GO" id="GO:0008017">
    <property type="term" value="F:microtubule binding"/>
    <property type="evidence" value="ECO:0000250"/>
    <property type="project" value="UniProtKB"/>
</dbReference>
<dbReference type="GO" id="GO:0051301">
    <property type="term" value="P:cell division"/>
    <property type="evidence" value="ECO:0007669"/>
    <property type="project" value="UniProtKB-KW"/>
</dbReference>
<dbReference type="GO" id="GO:1990758">
    <property type="term" value="P:mitotic sister chromatid biorientation"/>
    <property type="evidence" value="ECO:0000250"/>
    <property type="project" value="UniProtKB"/>
</dbReference>
<dbReference type="FunFam" id="1.10.418.30:FF:000002">
    <property type="entry name" value="NDC80, kinetochore complex component"/>
    <property type="match status" value="1"/>
</dbReference>
<dbReference type="Gene3D" id="1.10.287.1490">
    <property type="match status" value="1"/>
</dbReference>
<dbReference type="Gene3D" id="1.10.418.30">
    <property type="entry name" value="Ncd80 complex, Ncd80 subunit"/>
    <property type="match status" value="1"/>
</dbReference>
<dbReference type="InterPro" id="IPR005550">
    <property type="entry name" value="Kinetochore_Ndc80"/>
</dbReference>
<dbReference type="InterPro" id="IPR055260">
    <property type="entry name" value="Ndc80_CH"/>
</dbReference>
<dbReference type="InterPro" id="IPR038273">
    <property type="entry name" value="Ndc80_sf"/>
</dbReference>
<dbReference type="PANTHER" id="PTHR10643">
    <property type="entry name" value="KINETOCHORE PROTEIN NDC80"/>
    <property type="match status" value="1"/>
</dbReference>
<dbReference type="PANTHER" id="PTHR10643:SF2">
    <property type="entry name" value="KINETOCHORE PROTEIN NDC80 HOMOLOG"/>
    <property type="match status" value="1"/>
</dbReference>
<dbReference type="Pfam" id="PF03801">
    <property type="entry name" value="Ndc80_HEC"/>
    <property type="match status" value="1"/>
</dbReference>
<proteinExistence type="inferred from homology"/>
<organism>
    <name type="scientific">Cryptococcus neoformans var. neoformans serotype D (strain B-3501A)</name>
    <name type="common">Filobasidiella neoformans</name>
    <dbReference type="NCBI Taxonomy" id="283643"/>
    <lineage>
        <taxon>Eukaryota</taxon>
        <taxon>Fungi</taxon>
        <taxon>Dikarya</taxon>
        <taxon>Basidiomycota</taxon>
        <taxon>Agaricomycotina</taxon>
        <taxon>Tremellomycetes</taxon>
        <taxon>Tremellales</taxon>
        <taxon>Cryptococcaceae</taxon>
        <taxon>Cryptococcus</taxon>
        <taxon>Cryptococcus neoformans species complex</taxon>
    </lineage>
</organism>
<evidence type="ECO:0000250" key="1"/>
<evidence type="ECO:0000255" key="2"/>
<evidence type="ECO:0000256" key="3">
    <source>
        <dbReference type="SAM" id="MobiDB-lite"/>
    </source>
</evidence>
<evidence type="ECO:0000305" key="4"/>
<gene>
    <name type="primary">NDC80</name>
    <name type="ordered locus">CNBE2690</name>
</gene>
<name>NDC80_CRYNB</name>